<feature type="chain" id="PRO_0000290354" description="U3 small nucleolar RNA-associated protein 14 homolog A">
    <location>
        <begin position="1"/>
        <end position="770"/>
    </location>
</feature>
<feature type="region of interest" description="Disordered" evidence="4">
    <location>
        <begin position="1"/>
        <end position="65"/>
    </location>
</feature>
<feature type="region of interest" description="Disordered" evidence="4">
    <location>
        <begin position="334"/>
        <end position="361"/>
    </location>
</feature>
<feature type="region of interest" description="Disordered" evidence="4">
    <location>
        <begin position="392"/>
        <end position="455"/>
    </location>
</feature>
<feature type="region of interest" description="Disordered" evidence="4">
    <location>
        <begin position="467"/>
        <end position="505"/>
    </location>
</feature>
<feature type="coiled-coil region" evidence="3">
    <location>
        <begin position="41"/>
        <end position="68"/>
    </location>
</feature>
<feature type="coiled-coil region" evidence="3">
    <location>
        <begin position="217"/>
        <end position="291"/>
    </location>
</feature>
<feature type="coiled-coil region" evidence="3">
    <location>
        <begin position="318"/>
        <end position="348"/>
    </location>
</feature>
<feature type="compositionally biased region" description="Polar residues" evidence="4">
    <location>
        <begin position="1"/>
        <end position="17"/>
    </location>
</feature>
<feature type="compositionally biased region" description="Basic and acidic residues" evidence="4">
    <location>
        <begin position="56"/>
        <end position="65"/>
    </location>
</feature>
<feature type="compositionally biased region" description="Acidic residues" evidence="4">
    <location>
        <begin position="343"/>
        <end position="358"/>
    </location>
</feature>
<feature type="compositionally biased region" description="Acidic residues" evidence="4">
    <location>
        <begin position="396"/>
        <end position="410"/>
    </location>
</feature>
<feature type="compositionally biased region" description="Basic and acidic residues" evidence="4">
    <location>
        <begin position="411"/>
        <end position="444"/>
    </location>
</feature>
<feature type="modified residue" description="Phosphoserine" evidence="2">
    <location>
        <position position="30"/>
    </location>
</feature>
<feature type="modified residue" description="Phosphoserine" evidence="2">
    <location>
        <position position="32"/>
    </location>
</feature>
<feature type="modified residue" description="Phosphoserine" evidence="2">
    <location>
        <position position="53"/>
    </location>
</feature>
<feature type="modified residue" description="Phosphoserine" evidence="2">
    <location>
        <position position="78"/>
    </location>
</feature>
<feature type="modified residue" description="Phosphoserine" evidence="2">
    <location>
        <position position="82"/>
    </location>
</feature>
<feature type="modified residue" description="Phosphothreonine" evidence="2">
    <location>
        <position position="206"/>
    </location>
</feature>
<feature type="modified residue" description="Phosphoserine" evidence="2">
    <location>
        <position position="406"/>
    </location>
</feature>
<feature type="modified residue" description="Phosphoserine" evidence="2">
    <location>
        <position position="408"/>
    </location>
</feature>
<feature type="modified residue" description="Phosphoserine" evidence="2">
    <location>
        <position position="453"/>
    </location>
</feature>
<feature type="modified residue" description="Phosphoserine" evidence="2">
    <location>
        <position position="567"/>
    </location>
</feature>
<feature type="modified residue" description="Citrulline" evidence="1">
    <location>
        <position position="588"/>
    </location>
</feature>
<feature type="cross-link" description="Glycyl lysine isopeptide (Lys-Gly) (interchain with G-Cter in SUMO2)" evidence="2">
    <location>
        <position position="449"/>
    </location>
</feature>
<feature type="cross-link" description="Glycyl lysine isopeptide (Lys-Gly) (interchain with G-Cter in SUMO2)" evidence="2">
    <location>
        <position position="732"/>
    </location>
</feature>
<gene>
    <name type="primary">UTP14A</name>
</gene>
<accession>Q3T0Q8</accession>
<proteinExistence type="evidence at transcript level"/>
<organism>
    <name type="scientific">Bos taurus</name>
    <name type="common">Bovine</name>
    <dbReference type="NCBI Taxonomy" id="9913"/>
    <lineage>
        <taxon>Eukaryota</taxon>
        <taxon>Metazoa</taxon>
        <taxon>Chordata</taxon>
        <taxon>Craniata</taxon>
        <taxon>Vertebrata</taxon>
        <taxon>Euteleostomi</taxon>
        <taxon>Mammalia</taxon>
        <taxon>Eutheria</taxon>
        <taxon>Laurasiatheria</taxon>
        <taxon>Artiodactyla</taxon>
        <taxon>Ruminantia</taxon>
        <taxon>Pecora</taxon>
        <taxon>Bovidae</taxon>
        <taxon>Bovinae</taxon>
        <taxon>Bos</taxon>
    </lineage>
</organism>
<comment type="function">
    <text evidence="1">May be required for ribosome biogenesis.</text>
</comment>
<comment type="subunit">
    <text evidence="2">Interacts with DHX37.</text>
</comment>
<comment type="subcellular location">
    <subcellularLocation>
        <location evidence="1">Nucleus</location>
        <location evidence="1">Nucleolus</location>
    </subcellularLocation>
</comment>
<comment type="PTM">
    <text evidence="1">Citrullinated by PADI4.</text>
</comment>
<comment type="similarity">
    <text evidence="5">Belongs to the UTP14 family.</text>
</comment>
<name>UT14A_BOVIN</name>
<reference key="1">
    <citation type="journal article" date="2005" name="BMC Genomics">
        <title>Characterization of 954 bovine full-CDS cDNA sequences.</title>
        <authorList>
            <person name="Harhay G.P."/>
            <person name="Sonstegard T.S."/>
            <person name="Keele J.W."/>
            <person name="Heaton M.P."/>
            <person name="Clawson M.L."/>
            <person name="Snelling W.M."/>
            <person name="Wiedmann R.T."/>
            <person name="Van Tassell C.P."/>
            <person name="Smith T.P.L."/>
        </authorList>
    </citation>
    <scope>NUCLEOTIDE SEQUENCE [LARGE SCALE MRNA]</scope>
</reference>
<reference key="2">
    <citation type="submission" date="2005-08" db="EMBL/GenBank/DDBJ databases">
        <authorList>
            <consortium name="NIH - Mammalian Gene Collection (MGC) project"/>
        </authorList>
    </citation>
    <scope>NUCLEOTIDE SEQUENCE [LARGE SCALE MRNA]</scope>
    <source>
        <strain>Crossbred X Angus</strain>
        <tissue>Ileum</tissue>
    </source>
</reference>
<protein>
    <recommendedName>
        <fullName>U3 small nucleolar RNA-associated protein 14 homolog A</fullName>
    </recommendedName>
</protein>
<evidence type="ECO:0000250" key="1"/>
<evidence type="ECO:0000250" key="2">
    <source>
        <dbReference type="UniProtKB" id="Q9BVJ6"/>
    </source>
</evidence>
<evidence type="ECO:0000255" key="3"/>
<evidence type="ECO:0000256" key="4">
    <source>
        <dbReference type="SAM" id="MobiDB-lite"/>
    </source>
</evidence>
<evidence type="ECO:0000305" key="5"/>
<keyword id="KW-0164">Citrullination</keyword>
<keyword id="KW-0175">Coiled coil</keyword>
<keyword id="KW-1017">Isopeptide bond</keyword>
<keyword id="KW-0539">Nucleus</keyword>
<keyword id="KW-0597">Phosphoprotein</keyword>
<keyword id="KW-1185">Reference proteome</keyword>
<keyword id="KW-0690">Ribosome biogenesis</keyword>
<keyword id="KW-0832">Ubl conjugation</keyword>
<sequence>MNANQAAESNLLASNQQKELEDLPKDYPLSTSEDEGDKDEERKHQKLLESISSLNGKDRQKLADRSEASLKVSEFSVSSEGSGEKLVLSDLLEPVKTSSSLAAVKKQLNRVKSKKTVELPLHREEIERIHREVAFNKSSQILSKWDPVVLKNRQAEQLVFPLSKPQSAFAPIEHVVNGWKAGTPLEQEIFNLLHKNKQPVTDPLLTPVEKASLKAMSLEEVKMRRAELQRARALQSYYEARARREKRIKSKKYHRILKKGKAKQALKDFEKLQKVNPAAALEELEKLDKARMMERMSLKHQNSGKWAKSKAIMAKYDLEARQAMQEQLARNKELTQKVRAASESEEEGEGQEEEEEPLVPDLVNEVQIKANGLNPWMFRNHFIDAKEAEVQKDLEDPAEPEAQETSESEEEKAVVEEETLLKEFEERRSLRQKSELNHMAEPVHRRVTKDPSSQEVLSDLRALCQKLRTENHQSGKQELSSARTAQREEPAREEEEPMLLQRPERARTLDELEELGREGCVENEELPRTAVEGLQLEKNLSNHIGAPKEKKRKEQMIDLQNLLTTKSPSVKSLAVPTTVQELEDEEERDQRQIIKEAFAGDDVIRDFLKEKREAVEASKPKDLDLTLPGWGEWGGIGLKPSAKKRRRFLIKAPEGPPRKDKNLPNVIINEKRNTHAAAHQVQVLPHPFTHHQQFERTIQTPVGSTWNTQRAFQKLTMPKVVTKPGHIIKPIKAEDVGYRSSSRSDLSVVQRNPKRLSIRHKKHLENNCVD</sequence>
<dbReference type="EMBL" id="BT030541">
    <property type="protein sequence ID" value="ABQ12981.1"/>
    <property type="molecule type" value="mRNA"/>
</dbReference>
<dbReference type="EMBL" id="BC102296">
    <property type="protein sequence ID" value="AAI02297.1"/>
    <property type="molecule type" value="mRNA"/>
</dbReference>
<dbReference type="RefSeq" id="NP_001029413.1">
    <property type="nucleotide sequence ID" value="NM_001034241.2"/>
</dbReference>
<dbReference type="SMR" id="Q3T0Q8"/>
<dbReference type="FunCoup" id="Q3T0Q8">
    <property type="interactions" value="2713"/>
</dbReference>
<dbReference type="STRING" id="9913.ENSBTAP00000017524"/>
<dbReference type="PaxDb" id="9913-ENSBTAP00000017524"/>
<dbReference type="Ensembl" id="ENSBTAT00000017524.5">
    <property type="protein sequence ID" value="ENSBTAP00000017524.3"/>
    <property type="gene ID" value="ENSBTAG00000013671.5"/>
</dbReference>
<dbReference type="GeneID" id="505324"/>
<dbReference type="KEGG" id="bta:505324"/>
<dbReference type="CTD" id="10813"/>
<dbReference type="VEuPathDB" id="HostDB:ENSBTAG00000013671"/>
<dbReference type="eggNOG" id="KOG2172">
    <property type="taxonomic scope" value="Eukaryota"/>
</dbReference>
<dbReference type="GeneTree" id="ENSGT00390000008142"/>
<dbReference type="HOGENOM" id="CLU_012635_1_0_1"/>
<dbReference type="InParanoid" id="Q3T0Q8"/>
<dbReference type="OMA" id="QVIEPMD"/>
<dbReference type="OrthoDB" id="277439at2759"/>
<dbReference type="TreeFam" id="TF314531"/>
<dbReference type="Reactome" id="R-BTA-6791226">
    <property type="pathway name" value="Major pathway of rRNA processing in the nucleolus and cytosol"/>
</dbReference>
<dbReference type="CD-CODE" id="D7FE2080">
    <property type="entry name" value="Nucleolus"/>
</dbReference>
<dbReference type="Proteomes" id="UP000009136">
    <property type="component" value="Chromosome X"/>
</dbReference>
<dbReference type="Bgee" id="ENSBTAG00000013671">
    <property type="expression patterns" value="Expressed in uterine horn and 106 other cell types or tissues"/>
</dbReference>
<dbReference type="GO" id="GO:0005730">
    <property type="term" value="C:nucleolus"/>
    <property type="evidence" value="ECO:0000318"/>
    <property type="project" value="GO_Central"/>
</dbReference>
<dbReference type="GO" id="GO:0032040">
    <property type="term" value="C:small-subunit processome"/>
    <property type="evidence" value="ECO:0000318"/>
    <property type="project" value="GO_Central"/>
</dbReference>
<dbReference type="GO" id="GO:0006364">
    <property type="term" value="P:rRNA processing"/>
    <property type="evidence" value="ECO:0007669"/>
    <property type="project" value="InterPro"/>
</dbReference>
<dbReference type="InterPro" id="IPR006709">
    <property type="entry name" value="SSU_processome_Utp14"/>
</dbReference>
<dbReference type="PANTHER" id="PTHR14150">
    <property type="entry name" value="U3 SMALL NUCLEOLAR RNA-ASSOCIATED PROTEIN 14"/>
    <property type="match status" value="1"/>
</dbReference>
<dbReference type="PANTHER" id="PTHR14150:SF12">
    <property type="entry name" value="U3 SMALL NUCLEOLAR RNA-ASSOCIATED PROTEIN 14 HOMOLOG A"/>
    <property type="match status" value="1"/>
</dbReference>
<dbReference type="Pfam" id="PF04615">
    <property type="entry name" value="Utp14"/>
    <property type="match status" value="1"/>
</dbReference>